<evidence type="ECO:0000250" key="1"/>
<evidence type="ECO:0000250" key="2">
    <source>
        <dbReference type="UniProtKB" id="P05231"/>
    </source>
</evidence>
<evidence type="ECO:0000250" key="3">
    <source>
        <dbReference type="UniProtKB" id="P08505"/>
    </source>
</evidence>
<evidence type="ECO:0000256" key="4">
    <source>
        <dbReference type="SAM" id="MobiDB-lite"/>
    </source>
</evidence>
<evidence type="ECO:0000305" key="5"/>
<keyword id="KW-0011">Acute phase</keyword>
<keyword id="KW-0202">Cytokine</keyword>
<keyword id="KW-1015">Disulfide bond</keyword>
<keyword id="KW-0339">Growth factor</keyword>
<keyword id="KW-0597">Phosphoprotein</keyword>
<keyword id="KW-0964">Secreted</keyword>
<keyword id="KW-0732">Signal</keyword>
<name>IL6_PHOVI</name>
<accession>Q28819</accession>
<dbReference type="EMBL" id="L46802">
    <property type="protein sequence ID" value="AAB01430.1"/>
    <property type="molecule type" value="mRNA"/>
</dbReference>
<dbReference type="SMR" id="Q28819"/>
<dbReference type="GO" id="GO:0005615">
    <property type="term" value="C:extracellular space"/>
    <property type="evidence" value="ECO:0007669"/>
    <property type="project" value="UniProtKB-KW"/>
</dbReference>
<dbReference type="GO" id="GO:0005896">
    <property type="term" value="C:interleukin-6 receptor complex"/>
    <property type="evidence" value="ECO:0007669"/>
    <property type="project" value="TreeGrafter"/>
</dbReference>
<dbReference type="GO" id="GO:0005125">
    <property type="term" value="F:cytokine activity"/>
    <property type="evidence" value="ECO:0007669"/>
    <property type="project" value="UniProtKB-KW"/>
</dbReference>
<dbReference type="GO" id="GO:0008083">
    <property type="term" value="F:growth factor activity"/>
    <property type="evidence" value="ECO:0007669"/>
    <property type="project" value="UniProtKB-KW"/>
</dbReference>
<dbReference type="GO" id="GO:0005138">
    <property type="term" value="F:interleukin-6 receptor binding"/>
    <property type="evidence" value="ECO:0007669"/>
    <property type="project" value="InterPro"/>
</dbReference>
<dbReference type="GO" id="GO:0006953">
    <property type="term" value="P:acute-phase response"/>
    <property type="evidence" value="ECO:0007669"/>
    <property type="project" value="UniProtKB-KW"/>
</dbReference>
<dbReference type="GO" id="GO:0042593">
    <property type="term" value="P:glucose homeostasis"/>
    <property type="evidence" value="ECO:0000250"/>
    <property type="project" value="UniProtKB"/>
</dbReference>
<dbReference type="GO" id="GO:0072574">
    <property type="term" value="P:hepatocyte proliferation"/>
    <property type="evidence" value="ECO:0000250"/>
    <property type="project" value="UniProtKB"/>
</dbReference>
<dbReference type="GO" id="GO:0070102">
    <property type="term" value="P:interleukin-6-mediated signaling pathway"/>
    <property type="evidence" value="ECO:0000250"/>
    <property type="project" value="UniProtKB"/>
</dbReference>
<dbReference type="GO" id="GO:0097421">
    <property type="term" value="P:liver regeneration"/>
    <property type="evidence" value="ECO:0000250"/>
    <property type="project" value="UniProtKB"/>
</dbReference>
<dbReference type="GO" id="GO:0051240">
    <property type="term" value="P:positive regulation of multicellular organismal process"/>
    <property type="evidence" value="ECO:0007669"/>
    <property type="project" value="UniProtKB-ARBA"/>
</dbReference>
<dbReference type="GO" id="GO:0046427">
    <property type="term" value="P:positive regulation of receptor signaling pathway via JAK-STAT"/>
    <property type="evidence" value="ECO:0007669"/>
    <property type="project" value="TreeGrafter"/>
</dbReference>
<dbReference type="GO" id="GO:1904894">
    <property type="term" value="P:positive regulation of receptor signaling pathway via STAT"/>
    <property type="evidence" value="ECO:0000250"/>
    <property type="project" value="UniProtKB"/>
</dbReference>
<dbReference type="GO" id="GO:0070092">
    <property type="term" value="P:regulation of glucagon secretion"/>
    <property type="evidence" value="ECO:0000250"/>
    <property type="project" value="UniProtKB"/>
</dbReference>
<dbReference type="GO" id="GO:0050796">
    <property type="term" value="P:regulation of insulin secretion"/>
    <property type="evidence" value="ECO:0000250"/>
    <property type="project" value="UniProtKB"/>
</dbReference>
<dbReference type="GO" id="GO:0014823">
    <property type="term" value="P:response to activity"/>
    <property type="evidence" value="ECO:0000250"/>
    <property type="project" value="UniProtKB"/>
</dbReference>
<dbReference type="GO" id="GO:0072540">
    <property type="term" value="P:T-helper 17 cell lineage commitment"/>
    <property type="evidence" value="ECO:0000250"/>
    <property type="project" value="UniProtKB"/>
</dbReference>
<dbReference type="GO" id="GO:0010573">
    <property type="term" value="P:vascular endothelial growth factor production"/>
    <property type="evidence" value="ECO:0000250"/>
    <property type="project" value="UniProtKB"/>
</dbReference>
<dbReference type="FunFam" id="1.20.1250.10:FF:000006">
    <property type="entry name" value="Interleukin-6"/>
    <property type="match status" value="1"/>
</dbReference>
<dbReference type="Gene3D" id="1.20.1250.10">
    <property type="match status" value="1"/>
</dbReference>
<dbReference type="InterPro" id="IPR009079">
    <property type="entry name" value="4_helix_cytokine-like_core"/>
</dbReference>
<dbReference type="InterPro" id="IPR003574">
    <property type="entry name" value="IL-6-like"/>
</dbReference>
<dbReference type="InterPro" id="IPR030474">
    <property type="entry name" value="IL-6/GCSF/MGF"/>
</dbReference>
<dbReference type="InterPro" id="IPR030473">
    <property type="entry name" value="IL6/GCSF/MGF_CS"/>
</dbReference>
<dbReference type="PANTHER" id="PTHR48494">
    <property type="entry name" value="INTERLEUKIN-6"/>
    <property type="match status" value="1"/>
</dbReference>
<dbReference type="PANTHER" id="PTHR48494:SF1">
    <property type="entry name" value="INTERLEUKIN-6"/>
    <property type="match status" value="1"/>
</dbReference>
<dbReference type="Pfam" id="PF00489">
    <property type="entry name" value="IL6"/>
    <property type="match status" value="1"/>
</dbReference>
<dbReference type="PIRSF" id="PIRSF001935">
    <property type="entry name" value="IL6_MGF_GCSF"/>
    <property type="match status" value="1"/>
</dbReference>
<dbReference type="PRINTS" id="PR00433">
    <property type="entry name" value="IL6GCSFMGF"/>
</dbReference>
<dbReference type="PRINTS" id="PR00434">
    <property type="entry name" value="INTERLEUKIN6"/>
</dbReference>
<dbReference type="SMART" id="SM00126">
    <property type="entry name" value="IL6"/>
    <property type="match status" value="1"/>
</dbReference>
<dbReference type="SUPFAM" id="SSF47266">
    <property type="entry name" value="4-helical cytokines"/>
    <property type="match status" value="1"/>
</dbReference>
<dbReference type="PROSITE" id="PS00254">
    <property type="entry name" value="INTERLEUKIN_6"/>
    <property type="match status" value="1"/>
</dbReference>
<proteinExistence type="evidence at transcript level"/>
<organism>
    <name type="scientific">Phoca vitulina</name>
    <name type="common">Harbor seal</name>
    <dbReference type="NCBI Taxonomy" id="9720"/>
    <lineage>
        <taxon>Eukaryota</taxon>
        <taxon>Metazoa</taxon>
        <taxon>Chordata</taxon>
        <taxon>Craniata</taxon>
        <taxon>Vertebrata</taxon>
        <taxon>Euteleostomi</taxon>
        <taxon>Mammalia</taxon>
        <taxon>Eutheria</taxon>
        <taxon>Laurasiatheria</taxon>
        <taxon>Carnivora</taxon>
        <taxon>Caniformia</taxon>
        <taxon>Pinnipedia</taxon>
        <taxon>Phocidae</taxon>
        <taxon>Phocinae</taxon>
        <taxon>Phoca</taxon>
    </lineage>
</organism>
<reference key="1">
    <citation type="journal article" date="1996" name="Immunogenetics">
        <title>Molecular cloning and sequencing of interleukin 6 cDNA fragments from the harbor seal (Phoca vitulina), killer whale (Orcinus orca), and Southern sea otter (Enhydra lutris nereis).</title>
        <authorList>
            <person name="King D.P."/>
            <person name="Schrenzel M.D."/>
            <person name="McKnight M.L."/>
            <person name="Reidarson T.H."/>
            <person name="Hanni K.D."/>
            <person name="Stott J.L."/>
            <person name="Ferrick D.A."/>
        </authorList>
    </citation>
    <scope>NUCLEOTIDE SEQUENCE [MRNA]</scope>
</reference>
<comment type="function">
    <text evidence="2">Cytokine with a wide variety of biological functions in immunity, tissue regeneration, and metabolism. Binds to IL6R, then the complex associates to the signaling subunit IL6ST/gp130 to trigger the intracellular IL6-signaling pathway. The interaction with the membrane-bound IL6R and IL6ST stimulates 'classic signaling', whereas the binding of IL6 and soluble IL6R to IL6ST stimulates 'trans-signaling'. Alternatively, 'cluster signaling' occurs when membrane-bound IL6:IL6R complexes on transmitter cells activate IL6ST receptors on neighboring receiver cells.</text>
</comment>
<comment type="function">
    <text evidence="2 3">IL6 is a potent inducer of the acute phase response. Rapid production of IL6 contributes to host defense during infection and tissue injury, but excessive IL6 synthesis is involved in disease pathology. In the innate immune response, is synthesized by myeloid cells, such as macrophages and dendritic cells, upon recognition of pathogens through toll-like receptors (TLRs) at the site of infection or tissue injury (By similarity). In the adaptive immune response, is required for the differentiation of B cells into immunoglobulin-secreting cells. Plays a major role in the differentiation of CD4(+) T cell subsets. Essential factor for the development of T follicular helper (Tfh) cells that are required for the induction of germinal-center formation. Required to drive naive CD4(+) T cells to the Th17 lineage. Also required for proliferation of myeloma cells and the survival of plasmablast cells (By similarity).</text>
</comment>
<comment type="function">
    <text evidence="2 3">Acts as an essential factor in bone homeostasis and on vessels directly or indirectly by induction of VEGF, resulting in increased angiogenesis activity and vascular permeability. Induces, through 'trans-signaling' and synergistically with IL1B and TNF, the production of VEGF. Involved in metabolic controls, is discharged into the bloodstream after muscle contraction increasing lipolysis and improving insulin resistance (By similarity). 'Trans-signaling' in central nervous system also regulates energy and glucose homeostasis. Mediates, through GLP-1, crosstalk between insulin-sensitive tissues, intestinal L cells and pancreatic islets to adapt to changes in insulin demand (By similarity). Also acts as a myokine (By similarity). Plays a protective role during liver injury, being required for maintenance of tissue regeneration (By similarity). Also has a pivotal role in iron metabolism by regulating HAMP/hepcidin expression upon inflammation or bacterial infection (By similarity). Through activation of IL6ST-YAP-NOTCH pathway, induces inflammation-induced epithelial regeneration (By similarity).</text>
</comment>
<comment type="subunit">
    <text evidence="2">Component of a hexamer of two molecules each of IL6, IL6R and IL6ST; first binds to IL6R to associate with the signaling subunit IL6ST. Interacts with IL6R (via the N-terminal ectodomain); this interaction may be affected by IL6R-binding with SORL1, hence decreasing IL6 cis signaling. Interacts with SORL1 (via the N-terminal ectodomain); this interaction leads to IL6 internalization and lysosomal degradation. May form a trimeric complex with the soluble SORL1 ectodomain and soluble IL6R receptor; this interaction might stabilize circulating IL6, hence promoting IL6 trans signaling.</text>
</comment>
<comment type="subcellular location">
    <subcellularLocation>
        <location evidence="2">Secreted</location>
    </subcellularLocation>
</comment>
<comment type="similarity">
    <text evidence="5">Belongs to the IL-6 superfamily.</text>
</comment>
<protein>
    <recommendedName>
        <fullName>Interleukin-6</fullName>
        <shortName>IL-6</shortName>
    </recommendedName>
</protein>
<sequence>RFTSAFSPVAFSLGLLLVMATAFPTPGPVGGESQADATSNRPPLTSPDKMEEFIKYILGKISALRKEMCDKYNKCEDSKEALAENNLRLPKLAEKDGCFQSGFNQETCLTRITTGLLEFQIHLKYIQANYEGNKEDANSVYISTKLLVQMLMKKVKSQDEVTTPDPTTDTSLQAILKAQDKWLKHTTIHLILRSLEDFLQFSLRAVRIM</sequence>
<gene>
    <name type="primary">IL6</name>
</gene>
<feature type="signal peptide" evidence="1">
    <location>
        <begin position="1" status="less than"/>
        <end position="26"/>
    </location>
</feature>
<feature type="chain" id="PRO_0000015590" description="Interleukin-6">
    <location>
        <begin position="27"/>
        <end position="209"/>
    </location>
</feature>
<feature type="region of interest" description="Disordered" evidence="4">
    <location>
        <begin position="28"/>
        <end position="47"/>
    </location>
</feature>
<feature type="modified residue" description="Phosphoserine" evidence="2">
    <location>
        <position position="78"/>
    </location>
</feature>
<feature type="disulfide bond" evidence="1">
    <location>
        <begin position="69"/>
        <end position="75"/>
    </location>
</feature>
<feature type="disulfide bond" evidence="1">
    <location>
        <begin position="98"/>
        <end position="108"/>
    </location>
</feature>
<feature type="non-terminal residue">
    <location>
        <position position="1"/>
    </location>
</feature>